<name>CLPB_NEIMB</name>
<dbReference type="EMBL" id="AE002098">
    <property type="protein sequence ID" value="AAF41829.1"/>
    <property type="molecule type" value="Genomic_DNA"/>
</dbReference>
<dbReference type="PIR" id="F81078">
    <property type="entry name" value="F81078"/>
</dbReference>
<dbReference type="RefSeq" id="NP_274481.1">
    <property type="nucleotide sequence ID" value="NC_003112.2"/>
</dbReference>
<dbReference type="RefSeq" id="WP_002225096.1">
    <property type="nucleotide sequence ID" value="NC_003112.2"/>
</dbReference>
<dbReference type="SMR" id="Q9JYQ8"/>
<dbReference type="FunCoup" id="Q9JYQ8">
    <property type="interactions" value="494"/>
</dbReference>
<dbReference type="STRING" id="122586.NMB1472"/>
<dbReference type="PaxDb" id="122586-NMB1472"/>
<dbReference type="KEGG" id="nme:NMB1472"/>
<dbReference type="PATRIC" id="fig|122586.8.peg.1864"/>
<dbReference type="HOGENOM" id="CLU_005070_4_0_4"/>
<dbReference type="InParanoid" id="Q9JYQ8"/>
<dbReference type="OrthoDB" id="9803641at2"/>
<dbReference type="Proteomes" id="UP000000425">
    <property type="component" value="Chromosome"/>
</dbReference>
<dbReference type="GO" id="GO:0005737">
    <property type="term" value="C:cytoplasm"/>
    <property type="evidence" value="ECO:0000318"/>
    <property type="project" value="GO_Central"/>
</dbReference>
<dbReference type="GO" id="GO:0005524">
    <property type="term" value="F:ATP binding"/>
    <property type="evidence" value="ECO:0007669"/>
    <property type="project" value="UniProtKB-KW"/>
</dbReference>
<dbReference type="GO" id="GO:0016887">
    <property type="term" value="F:ATP hydrolysis activity"/>
    <property type="evidence" value="ECO:0000318"/>
    <property type="project" value="GO_Central"/>
</dbReference>
<dbReference type="GO" id="GO:0034605">
    <property type="term" value="P:cellular response to heat"/>
    <property type="evidence" value="ECO:0000318"/>
    <property type="project" value="GO_Central"/>
</dbReference>
<dbReference type="GO" id="GO:0042026">
    <property type="term" value="P:protein refolding"/>
    <property type="evidence" value="ECO:0007669"/>
    <property type="project" value="InterPro"/>
</dbReference>
<dbReference type="CDD" id="cd00009">
    <property type="entry name" value="AAA"/>
    <property type="match status" value="1"/>
</dbReference>
<dbReference type="CDD" id="cd19499">
    <property type="entry name" value="RecA-like_ClpB_Hsp104-like"/>
    <property type="match status" value="1"/>
</dbReference>
<dbReference type="FunFam" id="1.10.8.60:FF:000017">
    <property type="entry name" value="ATP-dependent chaperone ClpB"/>
    <property type="match status" value="1"/>
</dbReference>
<dbReference type="FunFam" id="3.40.50.300:FF:000120">
    <property type="entry name" value="ATP-dependent chaperone ClpB"/>
    <property type="match status" value="1"/>
</dbReference>
<dbReference type="FunFam" id="3.40.50.300:FF:000025">
    <property type="entry name" value="ATP-dependent Clp protease subunit"/>
    <property type="match status" value="1"/>
</dbReference>
<dbReference type="FunFam" id="3.40.50.300:FF:000010">
    <property type="entry name" value="Chaperone clpB 1, putative"/>
    <property type="match status" value="1"/>
</dbReference>
<dbReference type="Gene3D" id="1.10.8.60">
    <property type="match status" value="1"/>
</dbReference>
<dbReference type="Gene3D" id="1.10.1780.10">
    <property type="entry name" value="Clp, N-terminal domain"/>
    <property type="match status" value="1"/>
</dbReference>
<dbReference type="Gene3D" id="3.40.50.300">
    <property type="entry name" value="P-loop containing nucleotide triphosphate hydrolases"/>
    <property type="match status" value="3"/>
</dbReference>
<dbReference type="InterPro" id="IPR003593">
    <property type="entry name" value="AAA+_ATPase"/>
</dbReference>
<dbReference type="InterPro" id="IPR003959">
    <property type="entry name" value="ATPase_AAA_core"/>
</dbReference>
<dbReference type="InterPro" id="IPR017730">
    <property type="entry name" value="Chaperonin_ClpB"/>
</dbReference>
<dbReference type="InterPro" id="IPR019489">
    <property type="entry name" value="Clp_ATPase_C"/>
</dbReference>
<dbReference type="InterPro" id="IPR036628">
    <property type="entry name" value="Clp_N_dom_sf"/>
</dbReference>
<dbReference type="InterPro" id="IPR004176">
    <property type="entry name" value="Clp_R_dom"/>
</dbReference>
<dbReference type="InterPro" id="IPR001270">
    <property type="entry name" value="ClpA/B"/>
</dbReference>
<dbReference type="InterPro" id="IPR018368">
    <property type="entry name" value="ClpA/B_CS1"/>
</dbReference>
<dbReference type="InterPro" id="IPR028299">
    <property type="entry name" value="ClpA/B_CS2"/>
</dbReference>
<dbReference type="InterPro" id="IPR041546">
    <property type="entry name" value="ClpA/ClpB_AAA_lid"/>
</dbReference>
<dbReference type="InterPro" id="IPR050130">
    <property type="entry name" value="ClpA_ClpB"/>
</dbReference>
<dbReference type="InterPro" id="IPR027417">
    <property type="entry name" value="P-loop_NTPase"/>
</dbReference>
<dbReference type="NCBIfam" id="TIGR03346">
    <property type="entry name" value="chaperone_ClpB"/>
    <property type="match status" value="1"/>
</dbReference>
<dbReference type="PANTHER" id="PTHR11638">
    <property type="entry name" value="ATP-DEPENDENT CLP PROTEASE"/>
    <property type="match status" value="1"/>
</dbReference>
<dbReference type="PANTHER" id="PTHR11638:SF18">
    <property type="entry name" value="HEAT SHOCK PROTEIN 104"/>
    <property type="match status" value="1"/>
</dbReference>
<dbReference type="Pfam" id="PF00004">
    <property type="entry name" value="AAA"/>
    <property type="match status" value="1"/>
</dbReference>
<dbReference type="Pfam" id="PF07724">
    <property type="entry name" value="AAA_2"/>
    <property type="match status" value="1"/>
</dbReference>
<dbReference type="Pfam" id="PF17871">
    <property type="entry name" value="AAA_lid_9"/>
    <property type="match status" value="1"/>
</dbReference>
<dbReference type="Pfam" id="PF02861">
    <property type="entry name" value="Clp_N"/>
    <property type="match status" value="2"/>
</dbReference>
<dbReference type="Pfam" id="PF10431">
    <property type="entry name" value="ClpB_D2-small"/>
    <property type="match status" value="1"/>
</dbReference>
<dbReference type="PRINTS" id="PR00300">
    <property type="entry name" value="CLPPROTEASEA"/>
</dbReference>
<dbReference type="SMART" id="SM00382">
    <property type="entry name" value="AAA"/>
    <property type="match status" value="2"/>
</dbReference>
<dbReference type="SMART" id="SM01086">
    <property type="entry name" value="ClpB_D2-small"/>
    <property type="match status" value="1"/>
</dbReference>
<dbReference type="SUPFAM" id="SSF81923">
    <property type="entry name" value="Double Clp-N motif"/>
    <property type="match status" value="1"/>
</dbReference>
<dbReference type="SUPFAM" id="SSF52540">
    <property type="entry name" value="P-loop containing nucleoside triphosphate hydrolases"/>
    <property type="match status" value="2"/>
</dbReference>
<dbReference type="PROSITE" id="PS51903">
    <property type="entry name" value="CLP_R"/>
    <property type="match status" value="1"/>
</dbReference>
<dbReference type="PROSITE" id="PS00870">
    <property type="entry name" value="CLPAB_1"/>
    <property type="match status" value="1"/>
</dbReference>
<dbReference type="PROSITE" id="PS00871">
    <property type="entry name" value="CLPAB_2"/>
    <property type="match status" value="1"/>
</dbReference>
<evidence type="ECO:0000250" key="1"/>
<evidence type="ECO:0000255" key="2">
    <source>
        <dbReference type="PROSITE-ProRule" id="PRU01251"/>
    </source>
</evidence>
<evidence type="ECO:0000305" key="3"/>
<accession>Q9JYQ8</accession>
<feature type="chain" id="PRO_0000191148" description="Chaperone protein ClpB">
    <location>
        <begin position="1"/>
        <end position="859"/>
    </location>
</feature>
<feature type="domain" description="Clp R" evidence="2">
    <location>
        <begin position="3"/>
        <end position="146"/>
    </location>
</feature>
<feature type="region of interest" description="Repeat 1" evidence="2">
    <location>
        <begin position="6"/>
        <end position="71"/>
    </location>
</feature>
<feature type="region of interest" description="Repeat 2" evidence="2">
    <location>
        <begin position="83"/>
        <end position="146"/>
    </location>
</feature>
<feature type="region of interest" description="NBD1" evidence="1">
    <location>
        <begin position="159"/>
        <end position="340"/>
    </location>
</feature>
<feature type="region of interest" description="Linker" evidence="1">
    <location>
        <begin position="341"/>
        <end position="549"/>
    </location>
</feature>
<feature type="region of interest" description="NBD2" evidence="1">
    <location>
        <begin position="559"/>
        <end position="768"/>
    </location>
</feature>
<feature type="region of interest" description="C-terminal" evidence="1">
    <location>
        <begin position="769"/>
        <end position="859"/>
    </location>
</feature>
<feature type="coiled-coil region" evidence="1">
    <location>
        <begin position="391"/>
        <end position="525"/>
    </location>
</feature>
<feature type="binding site" evidence="1">
    <location>
        <begin position="206"/>
        <end position="213"/>
    </location>
    <ligand>
        <name>ATP</name>
        <dbReference type="ChEBI" id="CHEBI:30616"/>
        <label>1</label>
    </ligand>
</feature>
<feature type="binding site" evidence="1">
    <location>
        <begin position="609"/>
        <end position="616"/>
    </location>
    <ligand>
        <name>ATP</name>
        <dbReference type="ChEBI" id="CHEBI:30616"/>
        <label>2</label>
    </ligand>
</feature>
<protein>
    <recommendedName>
        <fullName>Chaperone protein ClpB</fullName>
    </recommendedName>
</protein>
<organism>
    <name type="scientific">Neisseria meningitidis serogroup B (strain ATCC BAA-335 / MC58)</name>
    <dbReference type="NCBI Taxonomy" id="122586"/>
    <lineage>
        <taxon>Bacteria</taxon>
        <taxon>Pseudomonadati</taxon>
        <taxon>Pseudomonadota</taxon>
        <taxon>Betaproteobacteria</taxon>
        <taxon>Neisseriales</taxon>
        <taxon>Neisseriaceae</taxon>
        <taxon>Neisseria</taxon>
    </lineage>
</organism>
<keyword id="KW-0067">ATP-binding</keyword>
<keyword id="KW-0143">Chaperone</keyword>
<keyword id="KW-0175">Coiled coil</keyword>
<keyword id="KW-0963">Cytoplasm</keyword>
<keyword id="KW-0547">Nucleotide-binding</keyword>
<keyword id="KW-1185">Reference proteome</keyword>
<keyword id="KW-0677">Repeat</keyword>
<keyword id="KW-0346">Stress response</keyword>
<gene>
    <name type="primary">clpB</name>
    <name type="ordered locus">NMB1472</name>
</gene>
<reference key="1">
    <citation type="journal article" date="2000" name="Science">
        <title>Complete genome sequence of Neisseria meningitidis serogroup B strain MC58.</title>
        <authorList>
            <person name="Tettelin H."/>
            <person name="Saunders N.J."/>
            <person name="Heidelberg J.F."/>
            <person name="Jeffries A.C."/>
            <person name="Nelson K.E."/>
            <person name="Eisen J.A."/>
            <person name="Ketchum K.A."/>
            <person name="Hood D.W."/>
            <person name="Peden J.F."/>
            <person name="Dodson R.J."/>
            <person name="Nelson W.C."/>
            <person name="Gwinn M.L."/>
            <person name="DeBoy R.T."/>
            <person name="Peterson J.D."/>
            <person name="Hickey E.K."/>
            <person name="Haft D.H."/>
            <person name="Salzberg S.L."/>
            <person name="White O."/>
            <person name="Fleischmann R.D."/>
            <person name="Dougherty B.A."/>
            <person name="Mason T.M."/>
            <person name="Ciecko A."/>
            <person name="Parksey D.S."/>
            <person name="Blair E."/>
            <person name="Cittone H."/>
            <person name="Clark E.B."/>
            <person name="Cotton M.D."/>
            <person name="Utterback T.R."/>
            <person name="Khouri H.M."/>
            <person name="Qin H."/>
            <person name="Vamathevan J.J."/>
            <person name="Gill J."/>
            <person name="Scarlato V."/>
            <person name="Masignani V."/>
            <person name="Pizza M."/>
            <person name="Grandi G."/>
            <person name="Sun L."/>
            <person name="Smith H.O."/>
            <person name="Fraser C.M."/>
            <person name="Moxon E.R."/>
            <person name="Rappuoli R."/>
            <person name="Venter J.C."/>
        </authorList>
    </citation>
    <scope>NUCLEOTIDE SEQUENCE [LARGE SCALE GENOMIC DNA]</scope>
    <source>
        <strain>ATCC BAA-335 / MC58</strain>
    </source>
</reference>
<proteinExistence type="inferred from homology"/>
<comment type="function">
    <text evidence="1">Part of a stress-induced multi-chaperone system, it is involved in the recovery of the cell from heat-induced damage, in cooperation with DnaK, DnaJ and GrpE. Acts before DnaK, in the processing of protein aggregates. Protein binding stimulates the ATPase activity; ATP hydrolysis unfolds the denatured protein aggregates, which probably helps expose new hydrophobic binding sites on the surface of ClpB-bound aggregates, contributing to the solubilization and refolding of denatured protein aggregates by DnaK (By similarity).</text>
</comment>
<comment type="subunit">
    <text evidence="1">Homohexamer. The oligomerization is ATP-dependent (By similarity).</text>
</comment>
<comment type="subcellular location">
    <subcellularLocation>
        <location evidence="3">Cytoplasm</location>
    </subcellularLocation>
</comment>
<comment type="domain">
    <text evidence="1">The Clp repeat (R) domain probably functions as a substrate-discriminating domain, recruiting aggregated proteins to the ClpB hexamer and/or stabilizing bound proteins. The NBD2 domain is responsible for oligomerization, whereas the NBD1 domain stabilizes the hexamer probably in an ATP-dependent manner. The movement of the coiled-coil domain is essential for ClpB ability to rescue proteins from an aggregated state, probably by pulling apart large aggregated proteins, which are bound between the coiled-coils motifs of adjacent ClpB subunits in the functional hexamer (By similarity).</text>
</comment>
<comment type="similarity">
    <text evidence="3">Belongs to the ClpA/ClpB family.</text>
</comment>
<sequence length="859" mass="95195">MRYDKLTAKFQQALAEAQSLALAADGSYLEAGFVLKALLDDQNSGAAALLAHAGVNVPQVKQRLQQHLNSLPKVSGQGGDILPSRELQAVLNLMDKAATKRSDAYIASELFLLALVQQNDATGKILKEAGATEQNINAAIDAVRGGQNVNDANAEDQRDALKKYTLDLTQRARDGKLDPVIGRDDEIRRAIQVLQRRTKNNPVLIGEPGVGKTAIVEGLAQRIVNGEVPESLRNKRLLVLDLAALIAGAKYRGEFEERLKGVLNDLAKDDGNTLIFIDEIHTLVGAGKTDGAMDAGNMLKPALARGELHCIGATTLDEYRQYIEKDAALERRFQKVLVGEPSVEDTIAILRGLQERYEIHHGIDITDPAIVAAAELSDRYITDRFLPDKAIDLIDEAASRVKMEKETKPEAMDKIDRRLIQLRMEKAHVEKEKDDASKKRLELIDEEINGLQKEYADLDEIWKAEKAISDGAANIKKQIDEVKIKIEQAKRQGDLALASKLMYEDLEHLEKQRAAAERADTDSTKPANKLLRNNVGAEEIAEVVSRMTGIPVSKMMEGERDKLLKMEEVLHRRVVGQDEAVRAVSDAIRRSRSGLADPNKPYGSFLFLGPTGVGKTELCKALAGFLFDSEDHLIRIDMSEYMEKHAVARLIGAPPGYVGYEEGGYLTEQVRRKPYSVILLDEVEKAHPDVFNILLQVLDDGRLTDGQGRTVDFKNTVIVMTSNIGSQHIQQMGIQDYEAVKEVVMEDVKEHFRPEMINRIDEVVVFHGLDQDNIRNIAKIQLKGLEKRLEKQNLRLAVSDAALDIIAKAGFDPIYGARPLKRAIQSEIENPLAKALLAGNYAPESEIRVEADGDRLKFA</sequence>